<feature type="chain" id="PRO_1000044982" description="1,4-alpha-glucan branching enzyme GlgB">
    <location>
        <begin position="1"/>
        <end position="731"/>
    </location>
</feature>
<feature type="active site" description="Nucleophile" evidence="1">
    <location>
        <position position="411"/>
    </location>
</feature>
<feature type="active site" description="Proton donor" evidence="1">
    <location>
        <position position="464"/>
    </location>
</feature>
<name>GLGB_MYCBP</name>
<evidence type="ECO:0000255" key="1">
    <source>
        <dbReference type="HAMAP-Rule" id="MF_00685"/>
    </source>
</evidence>
<sequence>MSRSEKLTGEHLAPEPAEMARLVAGTHHNPHGILGAHEYGDHTVIRAFRPHAVEVVALVGKDRFSLQHLDSGLFAVALPFVDLIDYRLQVTYEGCEPHTVADAYRFLPTLGEVDLHLFAEGRHERLWEVLGAHPRSFTTADGVVSGVSFAVWAPNAKGVSLIGEFNGWNGHEAPMRVLGPSGVWELFWPDFPCDGLYKFRVHGADGVVTDRADPFAFGTEVPPQTASRVTSSDYTWGDDDWMAGRALRNPVNEAMSTYEVHLGSWRPGLSYRQLARELTDYIVDQGFTHVELLPVAEHPFAGSWGYQVTSYYAPTSRFGTPDDFRALVDALHQAGIGVIVDWVPAHFPKDAWALGRFDGTPLYEHSDPKRGEQLDWGTYVFDFGRPEVRNFLVANALYWLQEFHIDGLRVDAVASMLYLDYSRPEGGWTPNVHGGRENLEAVQFLQEMNATAHKVAPGIVTIAEESTSWPGVTRPTNIGGLGFSMKWNMGWMHDTLDYVSRDPVYRSYHHHEMTFSMLYAFSENYVLPLSHDEVVHGKGTLWGRMPGNNHVKAAGLRSLLAYQWAHPGKQLLFMGQEFGQRAEWSEQRGLDWFQLDENGFSNGIQRLVRDINDIYRCHPALWSLDTTPEGYSWIDANDSANNVLSFMRYGSDGSVLACVFNFAGAEHRDYRLGLPRAGRWREVLNTDATIYHGSGIGNLGGVDATDDPWHGRPASAVLVLPPTSALWLTPA</sequence>
<accession>A1KIB6</accession>
<organism>
    <name type="scientific">Mycobacterium bovis (strain BCG / Pasteur 1173P2)</name>
    <dbReference type="NCBI Taxonomy" id="410289"/>
    <lineage>
        <taxon>Bacteria</taxon>
        <taxon>Bacillati</taxon>
        <taxon>Actinomycetota</taxon>
        <taxon>Actinomycetes</taxon>
        <taxon>Mycobacteriales</taxon>
        <taxon>Mycobacteriaceae</taxon>
        <taxon>Mycobacterium</taxon>
        <taxon>Mycobacterium tuberculosis complex</taxon>
    </lineage>
</organism>
<proteinExistence type="inferred from homology"/>
<comment type="function">
    <text evidence="1">Catalyzes the formation of the alpha-1,6-glucosidic linkages in glycogen by scission of a 1,4-alpha-linked oligosaccharide from growing alpha-1,4-glucan chains and the subsequent attachment of the oligosaccharide to the alpha-1,6 position.</text>
</comment>
<comment type="catalytic activity">
    <reaction evidence="1">
        <text>Transfers a segment of a (1-&gt;4)-alpha-D-glucan chain to a primary hydroxy group in a similar glucan chain.</text>
        <dbReference type="EC" id="2.4.1.18"/>
    </reaction>
</comment>
<comment type="pathway">
    <text evidence="1">Glycan biosynthesis; glycogen biosynthesis.</text>
</comment>
<comment type="subunit">
    <text evidence="1">Monomer.</text>
</comment>
<comment type="similarity">
    <text evidence="1">Belongs to the glycosyl hydrolase 13 family. GlgB subfamily.</text>
</comment>
<reference key="1">
    <citation type="journal article" date="2007" name="Proc. Natl. Acad. Sci. U.S.A.">
        <title>Genome plasticity of BCG and impact on vaccine efficacy.</title>
        <authorList>
            <person name="Brosch R."/>
            <person name="Gordon S.V."/>
            <person name="Garnier T."/>
            <person name="Eiglmeier K."/>
            <person name="Frigui W."/>
            <person name="Valenti P."/>
            <person name="Dos Santos S."/>
            <person name="Duthoy S."/>
            <person name="Lacroix C."/>
            <person name="Garcia-Pelayo C."/>
            <person name="Inwald J.K."/>
            <person name="Golby P."/>
            <person name="Garcia J.N."/>
            <person name="Hewinson R.G."/>
            <person name="Behr M.A."/>
            <person name="Quail M.A."/>
            <person name="Churcher C."/>
            <person name="Barrell B.G."/>
            <person name="Parkhill J."/>
            <person name="Cole S.T."/>
        </authorList>
    </citation>
    <scope>NUCLEOTIDE SEQUENCE [LARGE SCALE GENOMIC DNA]</scope>
    <source>
        <strain>BCG / Pasteur 1173P2</strain>
    </source>
</reference>
<gene>
    <name evidence="1" type="primary">glgB</name>
    <name type="ordered locus">BCG_1388c</name>
</gene>
<protein>
    <recommendedName>
        <fullName evidence="1">1,4-alpha-glucan branching enzyme GlgB</fullName>
        <ecNumber evidence="1">2.4.1.18</ecNumber>
    </recommendedName>
    <alternativeName>
        <fullName evidence="1">1,4-alpha-D-glucan:1,4-alpha-D-glucan 6-glucosyl-transferase</fullName>
    </alternativeName>
    <alternativeName>
        <fullName evidence="1">Alpha-(1-&gt;4)-glucan branching enzyme</fullName>
    </alternativeName>
    <alternativeName>
        <fullName evidence="1">Glycogen branching enzyme</fullName>
        <shortName evidence="1">BE</shortName>
    </alternativeName>
</protein>
<keyword id="KW-0119">Carbohydrate metabolism</keyword>
<keyword id="KW-0320">Glycogen biosynthesis</keyword>
<keyword id="KW-0321">Glycogen metabolism</keyword>
<keyword id="KW-0328">Glycosyltransferase</keyword>
<keyword id="KW-0808">Transferase</keyword>
<dbReference type="EC" id="2.4.1.18" evidence="1"/>
<dbReference type="EMBL" id="AM408590">
    <property type="protein sequence ID" value="CAL71375.1"/>
    <property type="molecule type" value="Genomic_DNA"/>
</dbReference>
<dbReference type="RefSeq" id="WP_003406892.1">
    <property type="nucleotide sequence ID" value="NC_008769.1"/>
</dbReference>
<dbReference type="SMR" id="A1KIB6"/>
<dbReference type="CAZy" id="CBM48">
    <property type="family name" value="Carbohydrate-Binding Module Family 48"/>
</dbReference>
<dbReference type="CAZy" id="GH13">
    <property type="family name" value="Glycoside Hydrolase Family 13"/>
</dbReference>
<dbReference type="KEGG" id="mbb:BCG_1388c"/>
<dbReference type="HOGENOM" id="CLU_004245_3_2_11"/>
<dbReference type="UniPathway" id="UPA00164"/>
<dbReference type="Proteomes" id="UP000001472">
    <property type="component" value="Chromosome"/>
</dbReference>
<dbReference type="GO" id="GO:0005829">
    <property type="term" value="C:cytosol"/>
    <property type="evidence" value="ECO:0007669"/>
    <property type="project" value="TreeGrafter"/>
</dbReference>
<dbReference type="GO" id="GO:0003844">
    <property type="term" value="F:1,4-alpha-glucan branching enzyme activity"/>
    <property type="evidence" value="ECO:0007669"/>
    <property type="project" value="UniProtKB-UniRule"/>
</dbReference>
<dbReference type="GO" id="GO:0043169">
    <property type="term" value="F:cation binding"/>
    <property type="evidence" value="ECO:0007669"/>
    <property type="project" value="InterPro"/>
</dbReference>
<dbReference type="GO" id="GO:0004553">
    <property type="term" value="F:hydrolase activity, hydrolyzing O-glycosyl compounds"/>
    <property type="evidence" value="ECO:0007669"/>
    <property type="project" value="InterPro"/>
</dbReference>
<dbReference type="GO" id="GO:0005978">
    <property type="term" value="P:glycogen biosynthetic process"/>
    <property type="evidence" value="ECO:0007669"/>
    <property type="project" value="UniProtKB-UniRule"/>
</dbReference>
<dbReference type="CDD" id="cd11322">
    <property type="entry name" value="AmyAc_Glg_BE"/>
    <property type="match status" value="1"/>
</dbReference>
<dbReference type="CDD" id="cd02855">
    <property type="entry name" value="E_set_GBE_prok_N"/>
    <property type="match status" value="1"/>
</dbReference>
<dbReference type="FunFam" id="2.60.40.10:FF:000169">
    <property type="entry name" value="1,4-alpha-glucan branching enzyme GlgB"/>
    <property type="match status" value="1"/>
</dbReference>
<dbReference type="FunFam" id="2.60.40.10:FF:002204">
    <property type="entry name" value="1,4-alpha-glucan branching enzyme GlgB"/>
    <property type="match status" value="1"/>
</dbReference>
<dbReference type="FunFam" id="2.60.40.1180:FF:000002">
    <property type="entry name" value="1,4-alpha-glucan branching enzyme GlgB"/>
    <property type="match status" value="1"/>
</dbReference>
<dbReference type="FunFam" id="3.20.20.80:FF:000003">
    <property type="entry name" value="1,4-alpha-glucan branching enzyme GlgB"/>
    <property type="match status" value="1"/>
</dbReference>
<dbReference type="Gene3D" id="3.20.20.80">
    <property type="entry name" value="Glycosidases"/>
    <property type="match status" value="1"/>
</dbReference>
<dbReference type="Gene3D" id="2.60.40.1180">
    <property type="entry name" value="Golgi alpha-mannosidase II"/>
    <property type="match status" value="1"/>
</dbReference>
<dbReference type="Gene3D" id="2.60.40.10">
    <property type="entry name" value="Immunoglobulins"/>
    <property type="match status" value="2"/>
</dbReference>
<dbReference type="HAMAP" id="MF_00685">
    <property type="entry name" value="GlgB"/>
    <property type="match status" value="1"/>
</dbReference>
<dbReference type="InterPro" id="IPR006048">
    <property type="entry name" value="A-amylase/branching_C"/>
</dbReference>
<dbReference type="InterPro" id="IPR037439">
    <property type="entry name" value="Branching_enzy"/>
</dbReference>
<dbReference type="InterPro" id="IPR006407">
    <property type="entry name" value="GlgB"/>
</dbReference>
<dbReference type="InterPro" id="IPR054169">
    <property type="entry name" value="GlgB_N"/>
</dbReference>
<dbReference type="InterPro" id="IPR044143">
    <property type="entry name" value="GlgB_N_E_set_prok"/>
</dbReference>
<dbReference type="InterPro" id="IPR006047">
    <property type="entry name" value="Glyco_hydro_13_cat_dom"/>
</dbReference>
<dbReference type="InterPro" id="IPR004193">
    <property type="entry name" value="Glyco_hydro_13_N"/>
</dbReference>
<dbReference type="InterPro" id="IPR013780">
    <property type="entry name" value="Glyco_hydro_b"/>
</dbReference>
<dbReference type="InterPro" id="IPR017853">
    <property type="entry name" value="Glycoside_hydrolase_SF"/>
</dbReference>
<dbReference type="InterPro" id="IPR013783">
    <property type="entry name" value="Ig-like_fold"/>
</dbReference>
<dbReference type="InterPro" id="IPR014756">
    <property type="entry name" value="Ig_E-set"/>
</dbReference>
<dbReference type="NCBIfam" id="TIGR01515">
    <property type="entry name" value="branching_enzym"/>
    <property type="match status" value="1"/>
</dbReference>
<dbReference type="NCBIfam" id="NF003811">
    <property type="entry name" value="PRK05402.1"/>
    <property type="match status" value="1"/>
</dbReference>
<dbReference type="NCBIfam" id="NF008967">
    <property type="entry name" value="PRK12313.1"/>
    <property type="match status" value="1"/>
</dbReference>
<dbReference type="PANTHER" id="PTHR43651">
    <property type="entry name" value="1,4-ALPHA-GLUCAN-BRANCHING ENZYME"/>
    <property type="match status" value="1"/>
</dbReference>
<dbReference type="PANTHER" id="PTHR43651:SF3">
    <property type="entry name" value="1,4-ALPHA-GLUCAN-BRANCHING ENZYME"/>
    <property type="match status" value="1"/>
</dbReference>
<dbReference type="Pfam" id="PF00128">
    <property type="entry name" value="Alpha-amylase"/>
    <property type="match status" value="2"/>
</dbReference>
<dbReference type="Pfam" id="PF02806">
    <property type="entry name" value="Alpha-amylase_C"/>
    <property type="match status" value="1"/>
</dbReference>
<dbReference type="Pfam" id="PF02922">
    <property type="entry name" value="CBM_48"/>
    <property type="match status" value="1"/>
</dbReference>
<dbReference type="Pfam" id="PF22019">
    <property type="entry name" value="GlgB_N"/>
    <property type="match status" value="1"/>
</dbReference>
<dbReference type="PIRSF" id="PIRSF000463">
    <property type="entry name" value="GlgB"/>
    <property type="match status" value="1"/>
</dbReference>
<dbReference type="SMART" id="SM00642">
    <property type="entry name" value="Aamy"/>
    <property type="match status" value="1"/>
</dbReference>
<dbReference type="SUPFAM" id="SSF51445">
    <property type="entry name" value="(Trans)glycosidases"/>
    <property type="match status" value="1"/>
</dbReference>
<dbReference type="SUPFAM" id="SSF81296">
    <property type="entry name" value="E set domains"/>
    <property type="match status" value="2"/>
</dbReference>
<dbReference type="SUPFAM" id="SSF51011">
    <property type="entry name" value="Glycosyl hydrolase domain"/>
    <property type="match status" value="1"/>
</dbReference>